<name>YENC1_YERET</name>
<gene>
    <name evidence="4" type="primary">yenC1</name>
</gene>
<comment type="function">
    <text evidence="2 6">Part of an orally active toxin complex (TC) with strong insecticidal effects on larvae of the Coleoptera Costelytra zealandica, Acrossidius tasmania and Adoryphorus couloni and some Lepidoptera larvae (PubMed:21278295). The TC has an endochitinase activity (Probable) (PubMed:21278295).</text>
</comment>
<comment type="activity regulation">
    <text evidence="2">Toxin complex is secreted when grown at 25 degrees Celsius or less; at higher temperatures the proteins are present intracellularly but not secreted.</text>
</comment>
<comment type="subunit">
    <text evidence="2 3">Semipurified toxin complex consists of at least YenA1-YenA2-YenB-YenC1-YenC2-Chi1-Chi2 (PubMed:21278295). The Yen-TC:K9 subcomplex is about 26 nm tall and 22 nm in diameter with 5-fold symmetry and 5 copies of YenA1, YenA2, Chi1 and Chi2; the chitinase subunits may be solvent accessible on the exterior the complex (PubMed:22158901). The Yen-TC:K9 subcomplex has no insecticidal activity (PubMed:22158901). The native complex with additional YenB, YenC1 and YenC2 subunits is 16 nm taller and is insecticidal; the toxicity-conferring subunits are present at about 1 copy each (PubMed:22158901).</text>
</comment>
<comment type="subcellular location">
    <subcellularLocation>
        <location evidence="2">Secreted</location>
    </subcellularLocation>
    <text evidence="2">Secreted when grown at 25 degrees Celsius or less, but not when grown at 30 or 37 degrees Celsius.</text>
</comment>
<comment type="disruption phenotype">
    <text evidence="2">A double yenC1-yenC2 deletion is no longer pathogenic in C.zealandica larvae.</text>
</comment>
<comment type="similarity">
    <text evidence="5">Belongs to the RHS family.</text>
</comment>
<evidence type="ECO:0000250" key="1">
    <source>
        <dbReference type="UniProtKB" id="B6A882"/>
    </source>
</evidence>
<evidence type="ECO:0000269" key="2">
    <source>
    </source>
</evidence>
<evidence type="ECO:0000269" key="3">
    <source>
    </source>
</evidence>
<evidence type="ECO:0000303" key="4">
    <source>
    </source>
</evidence>
<evidence type="ECO:0000305" key="5"/>
<evidence type="ECO:0000305" key="6">
    <source>
    </source>
</evidence>
<protein>
    <recommendedName>
        <fullName evidence="4">Toxin subunit YenC1</fullName>
    </recommendedName>
</protein>
<dbReference type="EMBL" id="DQ400808">
    <property type="protein sequence ID" value="ABG33865.1"/>
    <property type="molecule type" value="Genomic_DNA"/>
</dbReference>
<dbReference type="RefSeq" id="WP_064513233.1">
    <property type="nucleotide sequence ID" value="NZ_CP010029.1"/>
</dbReference>
<dbReference type="SMR" id="B6A881"/>
<dbReference type="STRING" id="935293.PL78_03765"/>
<dbReference type="KEGG" id="yeg:PL78_03765"/>
<dbReference type="PATRIC" id="fig|935293.3.peg.810"/>
<dbReference type="OrthoDB" id="8596416at2"/>
<dbReference type="GO" id="GO:0005576">
    <property type="term" value="C:extracellular region"/>
    <property type="evidence" value="ECO:0007669"/>
    <property type="project" value="UniProtKB-SubCell"/>
</dbReference>
<dbReference type="CDD" id="cd16834">
    <property type="entry name" value="CNF1-like"/>
    <property type="match status" value="1"/>
</dbReference>
<dbReference type="Gene3D" id="3.60.100.10">
    <property type="entry name" value="Cytotoxic necrotizing factor, Rho-activating domain"/>
    <property type="match status" value="1"/>
</dbReference>
<dbReference type="Gene3D" id="2.180.10.10">
    <property type="entry name" value="RHS repeat-associated core"/>
    <property type="match status" value="1"/>
</dbReference>
<dbReference type="InterPro" id="IPR008430">
    <property type="entry name" value="CNF_Rho-act"/>
</dbReference>
<dbReference type="InterPro" id="IPR037040">
    <property type="entry name" value="CNF_Rho-act_sf"/>
</dbReference>
<dbReference type="InterPro" id="IPR011324">
    <property type="entry name" value="Cytotoxic_necrot_fac-like_cat"/>
</dbReference>
<dbReference type="InterPro" id="IPR022385">
    <property type="entry name" value="Rhs_assc_core"/>
</dbReference>
<dbReference type="InterPro" id="IPR050708">
    <property type="entry name" value="T6SS_VgrG/RHS"/>
</dbReference>
<dbReference type="InterPro" id="IPR041508">
    <property type="entry name" value="TcC-like_repeat"/>
</dbReference>
<dbReference type="NCBIfam" id="TIGR03696">
    <property type="entry name" value="Rhs_assc_core"/>
    <property type="match status" value="1"/>
</dbReference>
<dbReference type="PANTHER" id="PTHR32305">
    <property type="match status" value="1"/>
</dbReference>
<dbReference type="PANTHER" id="PTHR32305:SF15">
    <property type="entry name" value="PROTEIN RHSA-RELATED"/>
    <property type="match status" value="1"/>
</dbReference>
<dbReference type="Pfam" id="PF05785">
    <property type="entry name" value="CNF1"/>
    <property type="match status" value="1"/>
</dbReference>
<dbReference type="Pfam" id="PF18807">
    <property type="entry name" value="TTc_toxin_rep"/>
    <property type="match status" value="1"/>
</dbReference>
<dbReference type="SUPFAM" id="SSF64438">
    <property type="entry name" value="CNF1/YfiH-like putative cysteine hydrolases"/>
    <property type="match status" value="1"/>
</dbReference>
<reference key="1">
    <citation type="journal article" date="2011" name="J. Bacteriol.">
        <title>The main virulence determinant of Yersinia entomophaga MH96 is a broad-host-range toxin complex active against insects.</title>
        <authorList>
            <person name="Hurst M.R."/>
            <person name="Jones S.A."/>
            <person name="Binglin T."/>
            <person name="Harper L.A."/>
            <person name="Jackson T.A."/>
            <person name="Glare T.R."/>
        </authorList>
    </citation>
    <scope>NUCLEOTIDE SEQUENCE [GENOMIC DNA]</scope>
    <scope>PROTEIN SEQUENCE OF 2-9</scope>
    <scope>IDENTIFICATION BY MASS SPECTROMETRY</scope>
    <scope>FUNCTION</scope>
    <scope>ACTIVITY REGULATION</scope>
    <scope>SUBUNIT</scope>
    <scope>SUBCELLULAR LOCATION</scope>
    <scope>DISRUPTION PHENOTYPE</scope>
    <source>
        <strain>ATCC BAA-1678 / DSM 22339 / MH96</strain>
    </source>
</reference>
<reference key="2">
    <citation type="journal article" date="2011" name="Proc. Natl. Acad. Sci. U.S.A.">
        <title>3D structure of the Yersinia entomophaga toxin complex and implications for insecticidal activity.</title>
        <authorList>
            <person name="Landsberg M.J."/>
            <person name="Jones S.A."/>
            <person name="Rothnagel R."/>
            <person name="Busby J.N."/>
            <person name="Marshall S.D."/>
            <person name="Simpson R.M."/>
            <person name="Lott J.S."/>
            <person name="Hankamer B."/>
            <person name="Hurst M.R."/>
        </authorList>
    </citation>
    <scope>FUNCTION</scope>
    <scope>SUBUNIT</scope>
    <source>
        <strain>ATCC BAA-1678 / DSM 22339 / MH96</strain>
    </source>
</reference>
<proteinExistence type="evidence at protein level"/>
<organism>
    <name type="scientific">Yersinia entomophaga</name>
    <dbReference type="NCBI Taxonomy" id="935293"/>
    <lineage>
        <taxon>Bacteria</taxon>
        <taxon>Pseudomonadati</taxon>
        <taxon>Pseudomonadota</taxon>
        <taxon>Gammaproteobacteria</taxon>
        <taxon>Enterobacterales</taxon>
        <taxon>Yersiniaceae</taxon>
        <taxon>Yersinia</taxon>
    </lineage>
</organism>
<accession>B6A881</accession>
<keyword id="KW-0903">Direct protein sequencing</keyword>
<keyword id="KW-0677">Repeat</keyword>
<keyword id="KW-0964">Secreted</keyword>
<keyword id="KW-0843">Virulence</keyword>
<feature type="initiator methionine" description="Removed" evidence="2">
    <location>
        <position position="1"/>
    </location>
</feature>
<feature type="chain" id="PRO_0000445774" description="Toxin subunit YenC1">
    <location>
        <begin position="2"/>
        <end position="974"/>
    </location>
</feature>
<feature type="repeat" description="RHS 1" evidence="1">
    <location>
        <begin position="165"/>
        <end position="179"/>
    </location>
</feature>
<feature type="repeat" description="RHS 2" evidence="1">
    <location>
        <begin position="290"/>
        <end position="304"/>
    </location>
</feature>
<feature type="repeat" description="RHS 3" evidence="1">
    <location>
        <begin position="322"/>
        <end position="336"/>
    </location>
</feature>
<feature type="repeat" description="RHS 4" evidence="1">
    <location>
        <begin position="354"/>
        <end position="368"/>
    </location>
</feature>
<feature type="repeat" description="RHS 5" evidence="1">
    <location>
        <begin position="398"/>
        <end position="412"/>
    </location>
</feature>
<feature type="repeat" description="RHS 6" evidence="1">
    <location>
        <begin position="490"/>
        <end position="504"/>
    </location>
</feature>
<feature type="repeat" description="RHS 7" evidence="1">
    <location>
        <begin position="570"/>
        <end position="584"/>
    </location>
</feature>
<feature type="repeat" description="RHS 8" evidence="1">
    <location>
        <begin position="596"/>
        <end position="610"/>
    </location>
</feature>
<feature type="repeat" description="RHS 9" evidence="1">
    <location>
        <begin position="630"/>
        <end position="644"/>
    </location>
</feature>
<feature type="region of interest" description="RHS-repeat associated core domain" evidence="5">
    <location>
        <begin position="600"/>
        <end position="680"/>
    </location>
</feature>
<feature type="region of interest" description="Cytotoxic necrotising factor domain" evidence="5">
    <location>
        <begin position="699"/>
        <end position="940"/>
    </location>
</feature>
<feature type="sequence conflict" description="In Ref. 1; AA sequence." evidence="2" ref="1">
    <original>D</original>
    <variation>L</variation>
    <location>
        <position position="5"/>
    </location>
</feature>
<feature type="sequence conflict" description="In Ref. 1; AA sequence." evidence="2" ref="1">
    <original>H</original>
    <variation>T</variation>
    <location>
        <position position="9"/>
    </location>
</feature>
<sequence>MNQFDSALHQGTPGVSVLDNRGHVIRELRYYRHPDTPQEIAERIAFHQYDSYGFISQSIDPRLAERRKQDSSVKPNLSYFTALSGEVLRTDGVDAGTIFSLNDIAARPAISISATGVSHTWQYEGENRPGRVLSRSEREKDREERIIERFYWAGSDASQKANNLAGQCLRHYNSAGLNQTLSIALTGTPISACFQPLLESAEPEWQGTNESAWLELLTPEIFTTYNRADANGETLVQTDAMGNIQRLAYDVAGFLKSSWLSLKGGQEQIIVKSLTYSAAGQKLQEEHGNGVLTTYSYEAETQRLIGIRTERPAGHLSGARVFQDLRYTYDPVGNVLRITNDAEATRFWRNQKVVPENTYIYDTLYQLVSANGREMANIPQQSSQLPTLSPIDNNAYTNYIRNYHYDSAGNLMQIRHTSAAANNSYTTNITVSKYSNRAVLSSLTDDVDKVEAFFDAAGRQNQLLPGQTLSWNARGELAKVTPVARDGQESDSETYRYDANSQRVSKMAIQQSNNNTQTRRVLYLAGLERRTIHQGNTLFETLLVVKIGEAGRAQVQAMHWELGQPTEVANDELRYSYDNLIGSSGLEVDGTGQLISQEEYYPYGGTAVWMARSQREASDKAYGYSGKERDATGLYYYGFRYYQPWAGRWLSADPAGTIDGLNLFRMVRNNPIVLHDPDGLAPGFFERISSFRKKDTLTISSLKGTGPFYTRSESEIDIDFLFSRQDRDKDFPPQNHKELSAEDRREVLEVSSGENITSANKSSKWYAGTHWETKPLKNNTDLVVLHNGVQGAAGININLNDIKPGRSVLVTAGTLTGCTMITGVKGNNFYALHAGTGTPSENWVTGEHGVTDNFRMLNKLIPDAGIDLNPEAVNDSLLTILDYFDNGTIAYNGKKGSEIHRDADNILNYRTTGYENTVGVSFSLLTKDKNGEVSASTLLELGELKPHKKHRTRGQFGMTELKYEARKNTVVKLR</sequence>